<dbReference type="EC" id="7.2.1.1" evidence="1"/>
<dbReference type="EMBL" id="CP001649">
    <property type="protein sequence ID" value="ACS78400.1"/>
    <property type="molecule type" value="Genomic_DNA"/>
</dbReference>
<dbReference type="RefSeq" id="WP_012765926.1">
    <property type="nucleotide sequence ID" value="NC_012881.1"/>
</dbReference>
<dbReference type="SMR" id="C6BWF6"/>
<dbReference type="STRING" id="526222.Desal_0333"/>
<dbReference type="KEGG" id="dsa:Desal_0333"/>
<dbReference type="eggNOG" id="COG2209">
    <property type="taxonomic scope" value="Bacteria"/>
</dbReference>
<dbReference type="HOGENOM" id="CLU_095255_0_0_7"/>
<dbReference type="OrthoDB" id="9803631at2"/>
<dbReference type="Proteomes" id="UP000002601">
    <property type="component" value="Chromosome"/>
</dbReference>
<dbReference type="GO" id="GO:0009276">
    <property type="term" value="C:Gram-negative-bacterium-type cell wall"/>
    <property type="evidence" value="ECO:0007669"/>
    <property type="project" value="InterPro"/>
</dbReference>
<dbReference type="GO" id="GO:0005886">
    <property type="term" value="C:plasma membrane"/>
    <property type="evidence" value="ECO:0007669"/>
    <property type="project" value="UniProtKB-SubCell"/>
</dbReference>
<dbReference type="GO" id="GO:0016655">
    <property type="term" value="F:oxidoreductase activity, acting on NAD(P)H, quinone or similar compound as acceptor"/>
    <property type="evidence" value="ECO:0007669"/>
    <property type="project" value="UniProtKB-UniRule"/>
</dbReference>
<dbReference type="GO" id="GO:0022904">
    <property type="term" value="P:respiratory electron transport chain"/>
    <property type="evidence" value="ECO:0007669"/>
    <property type="project" value="InterPro"/>
</dbReference>
<dbReference type="GO" id="GO:0006814">
    <property type="term" value="P:sodium ion transport"/>
    <property type="evidence" value="ECO:0007669"/>
    <property type="project" value="UniProtKB-UniRule"/>
</dbReference>
<dbReference type="HAMAP" id="MF_00429">
    <property type="entry name" value="NqrE"/>
    <property type="match status" value="1"/>
</dbReference>
<dbReference type="InterPro" id="IPR003667">
    <property type="entry name" value="NqrDE/RnfAE"/>
</dbReference>
<dbReference type="InterPro" id="IPR050133">
    <property type="entry name" value="NqrDE/RnfAE_oxidrdctase"/>
</dbReference>
<dbReference type="InterPro" id="IPR010967">
    <property type="entry name" value="NqrE"/>
</dbReference>
<dbReference type="NCBIfam" id="TIGR01940">
    <property type="entry name" value="nqrE"/>
    <property type="match status" value="1"/>
</dbReference>
<dbReference type="PANTHER" id="PTHR30335">
    <property type="entry name" value="INTEGRAL MEMBRANE PROTEIN OF SOXR-REDUCING COMPLEX"/>
    <property type="match status" value="1"/>
</dbReference>
<dbReference type="PANTHER" id="PTHR30335:SF1">
    <property type="entry name" value="NA(+)-TRANSLOCATING NADH-QUINONE REDUCTASE SUBUNIT E"/>
    <property type="match status" value="1"/>
</dbReference>
<dbReference type="Pfam" id="PF02508">
    <property type="entry name" value="Rnf-Nqr"/>
    <property type="match status" value="1"/>
</dbReference>
<dbReference type="PIRSF" id="PIRSF006102">
    <property type="entry name" value="NQR_DE"/>
    <property type="match status" value="1"/>
</dbReference>
<gene>
    <name evidence="1" type="primary">nqrE</name>
    <name type="ordered locus">Desal_0333</name>
</gene>
<evidence type="ECO:0000255" key="1">
    <source>
        <dbReference type="HAMAP-Rule" id="MF_00429"/>
    </source>
</evidence>
<keyword id="KW-0997">Cell inner membrane</keyword>
<keyword id="KW-1003">Cell membrane</keyword>
<keyword id="KW-0406">Ion transport</keyword>
<keyword id="KW-0472">Membrane</keyword>
<keyword id="KW-0520">NAD</keyword>
<keyword id="KW-1185">Reference proteome</keyword>
<keyword id="KW-0915">Sodium</keyword>
<keyword id="KW-0739">Sodium transport</keyword>
<keyword id="KW-1278">Translocase</keyword>
<keyword id="KW-0812">Transmembrane</keyword>
<keyword id="KW-1133">Transmembrane helix</keyword>
<keyword id="KW-0813">Transport</keyword>
<keyword id="KW-0830">Ubiquinone</keyword>
<feature type="chain" id="PRO_1000206066" description="Na(+)-translocating NADH-quinone reductase subunit E">
    <location>
        <begin position="1"/>
        <end position="202"/>
    </location>
</feature>
<feature type="transmembrane region" description="Helical" evidence="1">
    <location>
        <begin position="11"/>
        <end position="31"/>
    </location>
</feature>
<feature type="transmembrane region" description="Helical" evidence="1">
    <location>
        <begin position="39"/>
        <end position="59"/>
    </location>
</feature>
<feature type="transmembrane region" description="Helical" evidence="1">
    <location>
        <begin position="79"/>
        <end position="99"/>
    </location>
</feature>
<feature type="transmembrane region" description="Helical" evidence="1">
    <location>
        <begin position="114"/>
        <end position="134"/>
    </location>
</feature>
<feature type="transmembrane region" description="Helical" evidence="1">
    <location>
        <begin position="144"/>
        <end position="164"/>
    </location>
</feature>
<feature type="transmembrane region" description="Helical" evidence="1">
    <location>
        <begin position="180"/>
        <end position="200"/>
    </location>
</feature>
<reference key="1">
    <citation type="submission" date="2009-06" db="EMBL/GenBank/DDBJ databases">
        <title>Complete sequence of Desulfovibrio salexigens DSM 2638.</title>
        <authorList>
            <consortium name="US DOE Joint Genome Institute"/>
            <person name="Lucas S."/>
            <person name="Copeland A."/>
            <person name="Lapidus A."/>
            <person name="Glavina del Rio T."/>
            <person name="Tice H."/>
            <person name="Bruce D."/>
            <person name="Goodwin L."/>
            <person name="Pitluck S."/>
            <person name="Munk A.C."/>
            <person name="Brettin T."/>
            <person name="Detter J.C."/>
            <person name="Han C."/>
            <person name="Tapia R."/>
            <person name="Larimer F."/>
            <person name="Land M."/>
            <person name="Hauser L."/>
            <person name="Kyrpides N."/>
            <person name="Anderson I."/>
            <person name="Wall J.D."/>
            <person name="Arkin A.P."/>
            <person name="Dehal P."/>
            <person name="Chivian D."/>
            <person name="Giles B."/>
            <person name="Hazen T.C."/>
        </authorList>
    </citation>
    <scope>NUCLEOTIDE SEQUENCE [LARGE SCALE GENOMIC DNA]</scope>
    <source>
        <strain>ATCC 14822 / DSM 2638 / NCIMB 8403 / VKM B-1763</strain>
    </source>
</reference>
<protein>
    <recommendedName>
        <fullName evidence="1">Na(+)-translocating NADH-quinone reductase subunit E</fullName>
        <shortName evidence="1">Na(+)-NQR subunit E</shortName>
        <shortName evidence="1">Na(+)-translocating NQR subunit E</shortName>
        <ecNumber evidence="1">7.2.1.1</ecNumber>
    </recommendedName>
    <alternativeName>
        <fullName evidence="1">NQR complex subunit E</fullName>
    </alternativeName>
    <alternativeName>
        <fullName evidence="1">NQR-1 subunit E</fullName>
    </alternativeName>
</protein>
<organism>
    <name type="scientific">Maridesulfovibrio salexigens (strain ATCC 14822 / DSM 2638 / NCIMB 8403 / VKM B-1763)</name>
    <name type="common">Desulfovibrio salexigens</name>
    <dbReference type="NCBI Taxonomy" id="526222"/>
    <lineage>
        <taxon>Bacteria</taxon>
        <taxon>Pseudomonadati</taxon>
        <taxon>Thermodesulfobacteriota</taxon>
        <taxon>Desulfovibrionia</taxon>
        <taxon>Desulfovibrionales</taxon>
        <taxon>Desulfovibrionaceae</taxon>
        <taxon>Maridesulfovibrio</taxon>
    </lineage>
</organism>
<name>NQRE_MARSD</name>
<sequence length="202" mass="21914">MEHLVNIFVKSIFIENLALAFFLGMCTYLAVSKKVQTSMGLGVAVIVVMTITVPVNNLLYNYFLREGALAWAGFGDTDLTFVGLISYIGVIAAIVQILEMTLDKYVPSLYNALGIFLPLITVNCAILGASLFMVERDYNFVESVTFGFGSGVGWALAIVLLAGIREKMKYSDVPEGLDGLGITFIVVGLMSFGFLSFSGIQM</sequence>
<comment type="function">
    <text evidence="1">NQR complex catalyzes the reduction of ubiquinone-1 to ubiquinol by two successive reactions, coupled with the transport of Na(+) ions from the cytoplasm to the periplasm. NqrA to NqrE are probably involved in the second step, the conversion of ubisemiquinone to ubiquinol.</text>
</comment>
<comment type="catalytic activity">
    <reaction evidence="1">
        <text>a ubiquinone + n Na(+)(in) + NADH + H(+) = a ubiquinol + n Na(+)(out) + NAD(+)</text>
        <dbReference type="Rhea" id="RHEA:47748"/>
        <dbReference type="Rhea" id="RHEA-COMP:9565"/>
        <dbReference type="Rhea" id="RHEA-COMP:9566"/>
        <dbReference type="ChEBI" id="CHEBI:15378"/>
        <dbReference type="ChEBI" id="CHEBI:16389"/>
        <dbReference type="ChEBI" id="CHEBI:17976"/>
        <dbReference type="ChEBI" id="CHEBI:29101"/>
        <dbReference type="ChEBI" id="CHEBI:57540"/>
        <dbReference type="ChEBI" id="CHEBI:57945"/>
        <dbReference type="EC" id="7.2.1.1"/>
    </reaction>
</comment>
<comment type="subunit">
    <text evidence="1">Composed of six subunits; NqrA, NqrB, NqrC, NqrD, NqrE and NqrF.</text>
</comment>
<comment type="subcellular location">
    <subcellularLocation>
        <location evidence="1">Cell inner membrane</location>
        <topology evidence="1">Multi-pass membrane protein</topology>
    </subcellularLocation>
</comment>
<comment type="similarity">
    <text evidence="1">Belongs to the NqrDE/RnfAE family.</text>
</comment>
<proteinExistence type="inferred from homology"/>
<accession>C6BWF6</accession>